<name>NHAA_HELAH</name>
<protein>
    <recommendedName>
        <fullName evidence="1">Na(+)/H(+) antiporter NhaA</fullName>
    </recommendedName>
    <alternativeName>
        <fullName evidence="1">Sodium/proton antiporter NhaA</fullName>
    </alternativeName>
</protein>
<sequence length="438" mass="47899">MNFKKTENALSLTLKNFIKSESFGGIFLFLNAVLAMVVANSFVKESYFALWHTPFGFQIGDFFIGFSLHNWIDDVLMALFFLMIGLEIKRELLFGELSSFKKASFPVIAAIGGMIAPGLIYFFLNADTPSQHGFGIPMATDIAFALGVIMLLGKRVPTALKVFLITLAVADDLGAIMVIALFYTTNLKFAWLLGALGVVLVLALLNRLNTHSLIPYLLLGVLLWFCVHQSGIHATIAAVVLAFMIPVKIPKDSKNVELLELGKRYAETSSEVLLTKEQQEILHSIGEKANALQSPLEKLEHFLAPISGYFIMPLFAFANAGVSVDSNINLEVDKVLLGVILGLCLGKPLGIFLITFIGEKFKITSRPKGISWWHILGAGFLAGIGFTMSMFISNLAFTGEHKDAMEVAKIAILLGSLISGIIGALYLFLLDKKATLKK</sequence>
<keyword id="KW-0050">Antiport</keyword>
<keyword id="KW-0997">Cell inner membrane</keyword>
<keyword id="KW-1003">Cell membrane</keyword>
<keyword id="KW-0406">Ion transport</keyword>
<keyword id="KW-0472">Membrane</keyword>
<keyword id="KW-0915">Sodium</keyword>
<keyword id="KW-0739">Sodium transport</keyword>
<keyword id="KW-0812">Transmembrane</keyword>
<keyword id="KW-1133">Transmembrane helix</keyword>
<keyword id="KW-0813">Transport</keyword>
<evidence type="ECO:0000255" key="1">
    <source>
        <dbReference type="HAMAP-Rule" id="MF_01844"/>
    </source>
</evidence>
<proteinExistence type="inferred from homology"/>
<accession>Q17YZ5</accession>
<reference key="1">
    <citation type="journal article" date="2006" name="PLoS Genet.">
        <title>Who ate whom? Adaptive Helicobacter genomic changes that accompanied a host jump from early humans to large felines.</title>
        <authorList>
            <person name="Eppinger M."/>
            <person name="Baar C."/>
            <person name="Linz B."/>
            <person name="Raddatz G."/>
            <person name="Lanz C."/>
            <person name="Keller H."/>
            <person name="Morelli G."/>
            <person name="Gressmann H."/>
            <person name="Achtman M."/>
            <person name="Schuster S.C."/>
        </authorList>
    </citation>
    <scope>NUCLEOTIDE SEQUENCE [LARGE SCALE GENOMIC DNA]</scope>
    <source>
        <strain>Sheeba</strain>
    </source>
</reference>
<feature type="chain" id="PRO_0000334317" description="Na(+)/H(+) antiporter NhaA">
    <location>
        <begin position="1"/>
        <end position="438"/>
    </location>
</feature>
<feature type="transmembrane region" description="Helical" evidence="1">
    <location>
        <begin position="23"/>
        <end position="43"/>
    </location>
</feature>
<feature type="transmembrane region" description="Helical" evidence="1">
    <location>
        <begin position="62"/>
        <end position="82"/>
    </location>
</feature>
<feature type="transmembrane region" description="Helical" evidence="1">
    <location>
        <begin position="104"/>
        <end position="124"/>
    </location>
</feature>
<feature type="transmembrane region" description="Helical" evidence="1">
    <location>
        <begin position="133"/>
        <end position="153"/>
    </location>
</feature>
<feature type="transmembrane region" description="Helical" evidence="1">
    <location>
        <begin position="162"/>
        <end position="182"/>
    </location>
</feature>
<feature type="transmembrane region" description="Helical" evidence="1">
    <location>
        <begin position="185"/>
        <end position="205"/>
    </location>
</feature>
<feature type="transmembrane region" description="Helical" evidence="1">
    <location>
        <begin position="212"/>
        <end position="232"/>
    </location>
</feature>
<feature type="transmembrane region" description="Helical" evidence="1">
    <location>
        <begin position="302"/>
        <end position="322"/>
    </location>
</feature>
<feature type="transmembrane region" description="Helical" evidence="1">
    <location>
        <begin position="337"/>
        <end position="357"/>
    </location>
</feature>
<feature type="transmembrane region" description="Helical" evidence="1">
    <location>
        <begin position="372"/>
        <end position="392"/>
    </location>
</feature>
<feature type="transmembrane region" description="Helical" evidence="1">
    <location>
        <begin position="410"/>
        <end position="430"/>
    </location>
</feature>
<gene>
    <name evidence="1" type="primary">nhaA</name>
    <name type="ordered locus">Hac_0288</name>
</gene>
<comment type="function">
    <text evidence="1">Na(+)/H(+) antiporter that extrudes sodium in exchange for external protons.</text>
</comment>
<comment type="catalytic activity">
    <reaction evidence="1">
        <text>Na(+)(in) + 2 H(+)(out) = Na(+)(out) + 2 H(+)(in)</text>
        <dbReference type="Rhea" id="RHEA:29251"/>
        <dbReference type="ChEBI" id="CHEBI:15378"/>
        <dbReference type="ChEBI" id="CHEBI:29101"/>
    </reaction>
    <physiologicalReaction direction="left-to-right" evidence="1">
        <dbReference type="Rhea" id="RHEA:29252"/>
    </physiologicalReaction>
</comment>
<comment type="subcellular location">
    <subcellularLocation>
        <location evidence="1">Cell inner membrane</location>
        <topology evidence="1">Multi-pass membrane protein</topology>
    </subcellularLocation>
</comment>
<comment type="similarity">
    <text evidence="1">Belongs to the NhaA Na(+)/H(+) (TC 2.A.33) antiporter family.</text>
</comment>
<organism>
    <name type="scientific">Helicobacter acinonychis (strain Sheeba)</name>
    <dbReference type="NCBI Taxonomy" id="382638"/>
    <lineage>
        <taxon>Bacteria</taxon>
        <taxon>Pseudomonadati</taxon>
        <taxon>Campylobacterota</taxon>
        <taxon>Epsilonproteobacteria</taxon>
        <taxon>Campylobacterales</taxon>
        <taxon>Helicobacteraceae</taxon>
        <taxon>Helicobacter</taxon>
    </lineage>
</organism>
<dbReference type="EMBL" id="AM260522">
    <property type="protein sequence ID" value="CAJ99131.1"/>
    <property type="molecule type" value="Genomic_DNA"/>
</dbReference>
<dbReference type="RefSeq" id="WP_011577246.1">
    <property type="nucleotide sequence ID" value="NC_008229.1"/>
</dbReference>
<dbReference type="SMR" id="Q17YZ5"/>
<dbReference type="STRING" id="382638.Hac_0288"/>
<dbReference type="GeneID" id="31757803"/>
<dbReference type="KEGG" id="hac:Hac_0288"/>
<dbReference type="eggNOG" id="COG3004">
    <property type="taxonomic scope" value="Bacteria"/>
</dbReference>
<dbReference type="HOGENOM" id="CLU_015803_1_2_7"/>
<dbReference type="OrthoDB" id="9808135at2"/>
<dbReference type="BioCyc" id="HACI382638:HAC_RS01285-MONOMER"/>
<dbReference type="Proteomes" id="UP000000775">
    <property type="component" value="Chromosome"/>
</dbReference>
<dbReference type="GO" id="GO:0005886">
    <property type="term" value="C:plasma membrane"/>
    <property type="evidence" value="ECO:0007669"/>
    <property type="project" value="UniProtKB-SubCell"/>
</dbReference>
<dbReference type="GO" id="GO:0015385">
    <property type="term" value="F:sodium:proton antiporter activity"/>
    <property type="evidence" value="ECO:0007669"/>
    <property type="project" value="TreeGrafter"/>
</dbReference>
<dbReference type="GO" id="GO:0006885">
    <property type="term" value="P:regulation of pH"/>
    <property type="evidence" value="ECO:0007669"/>
    <property type="project" value="InterPro"/>
</dbReference>
<dbReference type="Gene3D" id="1.20.1530.10">
    <property type="entry name" value="Na+/H+ antiporter like domain"/>
    <property type="match status" value="1"/>
</dbReference>
<dbReference type="HAMAP" id="MF_01844">
    <property type="entry name" value="NhaA"/>
    <property type="match status" value="1"/>
</dbReference>
<dbReference type="InterPro" id="IPR023171">
    <property type="entry name" value="Na/H_antiporter_dom_sf"/>
</dbReference>
<dbReference type="InterPro" id="IPR004670">
    <property type="entry name" value="NhaA"/>
</dbReference>
<dbReference type="NCBIfam" id="TIGR00773">
    <property type="entry name" value="NhaA"/>
    <property type="match status" value="1"/>
</dbReference>
<dbReference type="NCBIfam" id="NF011428">
    <property type="entry name" value="PRK14856.1"/>
    <property type="match status" value="1"/>
</dbReference>
<dbReference type="PANTHER" id="PTHR30341:SF0">
    <property type="entry name" value="NA(+)_H(+) ANTIPORTER NHAA"/>
    <property type="match status" value="1"/>
</dbReference>
<dbReference type="PANTHER" id="PTHR30341">
    <property type="entry name" value="SODIUM ION/PROTON ANTIPORTER NHAA-RELATED"/>
    <property type="match status" value="1"/>
</dbReference>
<dbReference type="Pfam" id="PF06965">
    <property type="entry name" value="Na_H_antiport_1"/>
    <property type="match status" value="1"/>
</dbReference>